<evidence type="ECO:0000255" key="1">
    <source>
        <dbReference type="HAMAP-Rule" id="MF_00171"/>
    </source>
</evidence>
<comment type="function">
    <text evidence="1">Formation of pseudouridine at positions 38, 39 and 40 in the anticodon stem and loop of transfer RNAs.</text>
</comment>
<comment type="catalytic activity">
    <reaction evidence="1">
        <text>uridine(38/39/40) in tRNA = pseudouridine(38/39/40) in tRNA</text>
        <dbReference type="Rhea" id="RHEA:22376"/>
        <dbReference type="Rhea" id="RHEA-COMP:10085"/>
        <dbReference type="Rhea" id="RHEA-COMP:10087"/>
        <dbReference type="ChEBI" id="CHEBI:65314"/>
        <dbReference type="ChEBI" id="CHEBI:65315"/>
        <dbReference type="EC" id="5.4.99.12"/>
    </reaction>
</comment>
<comment type="subunit">
    <text evidence="1">Homodimer.</text>
</comment>
<comment type="similarity">
    <text evidence="1">Belongs to the tRNA pseudouridine synthase TruA family.</text>
</comment>
<gene>
    <name evidence="1" type="primary">truA</name>
    <name type="ordered locus">VCM66_0955</name>
</gene>
<proteinExistence type="inferred from homology"/>
<dbReference type="EC" id="5.4.99.12" evidence="1"/>
<dbReference type="EMBL" id="CP001233">
    <property type="protein sequence ID" value="ACP05273.1"/>
    <property type="molecule type" value="Genomic_DNA"/>
</dbReference>
<dbReference type="RefSeq" id="WP_001216995.1">
    <property type="nucleotide sequence ID" value="NC_012578.1"/>
</dbReference>
<dbReference type="SMR" id="C3LTP7"/>
<dbReference type="KEGG" id="vcm:VCM66_0955"/>
<dbReference type="HOGENOM" id="CLU_014673_0_2_6"/>
<dbReference type="Proteomes" id="UP000001217">
    <property type="component" value="Chromosome I"/>
</dbReference>
<dbReference type="GO" id="GO:0003723">
    <property type="term" value="F:RNA binding"/>
    <property type="evidence" value="ECO:0007669"/>
    <property type="project" value="InterPro"/>
</dbReference>
<dbReference type="GO" id="GO:0160147">
    <property type="term" value="F:tRNA pseudouridine(38-40) synthase activity"/>
    <property type="evidence" value="ECO:0007669"/>
    <property type="project" value="UniProtKB-EC"/>
</dbReference>
<dbReference type="GO" id="GO:0031119">
    <property type="term" value="P:tRNA pseudouridine synthesis"/>
    <property type="evidence" value="ECO:0007669"/>
    <property type="project" value="UniProtKB-UniRule"/>
</dbReference>
<dbReference type="CDD" id="cd02570">
    <property type="entry name" value="PseudoU_synth_EcTruA"/>
    <property type="match status" value="1"/>
</dbReference>
<dbReference type="FunFam" id="3.30.70.580:FF:000001">
    <property type="entry name" value="tRNA pseudouridine synthase A"/>
    <property type="match status" value="1"/>
</dbReference>
<dbReference type="FunFam" id="3.30.70.660:FF:000001">
    <property type="entry name" value="tRNA pseudouridine synthase A"/>
    <property type="match status" value="1"/>
</dbReference>
<dbReference type="Gene3D" id="3.30.70.660">
    <property type="entry name" value="Pseudouridine synthase I, catalytic domain, C-terminal subdomain"/>
    <property type="match status" value="1"/>
</dbReference>
<dbReference type="Gene3D" id="3.30.70.580">
    <property type="entry name" value="Pseudouridine synthase I, catalytic domain, N-terminal subdomain"/>
    <property type="match status" value="1"/>
</dbReference>
<dbReference type="HAMAP" id="MF_00171">
    <property type="entry name" value="TruA"/>
    <property type="match status" value="1"/>
</dbReference>
<dbReference type="InterPro" id="IPR020103">
    <property type="entry name" value="PsdUridine_synth_cat_dom_sf"/>
</dbReference>
<dbReference type="InterPro" id="IPR001406">
    <property type="entry name" value="PsdUridine_synth_TruA"/>
</dbReference>
<dbReference type="InterPro" id="IPR020097">
    <property type="entry name" value="PsdUridine_synth_TruA_a/b_dom"/>
</dbReference>
<dbReference type="InterPro" id="IPR020095">
    <property type="entry name" value="PsdUridine_synth_TruA_C"/>
</dbReference>
<dbReference type="InterPro" id="IPR020094">
    <property type="entry name" value="TruA/RsuA/RluB/E/F_N"/>
</dbReference>
<dbReference type="NCBIfam" id="TIGR00071">
    <property type="entry name" value="hisT_truA"/>
    <property type="match status" value="1"/>
</dbReference>
<dbReference type="PANTHER" id="PTHR11142">
    <property type="entry name" value="PSEUDOURIDYLATE SYNTHASE"/>
    <property type="match status" value="1"/>
</dbReference>
<dbReference type="PANTHER" id="PTHR11142:SF0">
    <property type="entry name" value="TRNA PSEUDOURIDINE SYNTHASE-LIKE 1"/>
    <property type="match status" value="1"/>
</dbReference>
<dbReference type="Pfam" id="PF01416">
    <property type="entry name" value="PseudoU_synth_1"/>
    <property type="match status" value="2"/>
</dbReference>
<dbReference type="PIRSF" id="PIRSF001430">
    <property type="entry name" value="tRNA_psdUrid_synth"/>
    <property type="match status" value="1"/>
</dbReference>
<dbReference type="SUPFAM" id="SSF55120">
    <property type="entry name" value="Pseudouridine synthase"/>
    <property type="match status" value="1"/>
</dbReference>
<name>TRUA_VIBCM</name>
<protein>
    <recommendedName>
        <fullName evidence="1">tRNA pseudouridine synthase A</fullName>
        <ecNumber evidence="1">5.4.99.12</ecNumber>
    </recommendedName>
    <alternativeName>
        <fullName evidence="1">tRNA pseudouridine(38-40) synthase</fullName>
    </alternativeName>
    <alternativeName>
        <fullName evidence="1">tRNA pseudouridylate synthase I</fullName>
    </alternativeName>
    <alternativeName>
        <fullName evidence="1">tRNA-uridine isomerase I</fullName>
    </alternativeName>
</protein>
<keyword id="KW-0413">Isomerase</keyword>
<keyword id="KW-0819">tRNA processing</keyword>
<accession>C3LTP7</accession>
<feature type="chain" id="PRO_1000194579" description="tRNA pseudouridine synthase A">
    <location>
        <begin position="1"/>
        <end position="264"/>
    </location>
</feature>
<feature type="active site" description="Nucleophile" evidence="1">
    <location>
        <position position="51"/>
    </location>
</feature>
<feature type="binding site" evidence="1">
    <location>
        <position position="109"/>
    </location>
    <ligand>
        <name>substrate</name>
    </ligand>
</feature>
<organism>
    <name type="scientific">Vibrio cholerae serotype O1 (strain M66-2)</name>
    <dbReference type="NCBI Taxonomy" id="579112"/>
    <lineage>
        <taxon>Bacteria</taxon>
        <taxon>Pseudomonadati</taxon>
        <taxon>Pseudomonadota</taxon>
        <taxon>Gammaproteobacteria</taxon>
        <taxon>Vibrionales</taxon>
        <taxon>Vibrionaceae</taxon>
        <taxon>Vibrio</taxon>
    </lineage>
</organism>
<sequence>MRIALGIEYDGTHYYGWQRQREVKSVQEALEKALSKIANHPVEVQCAGRTDAGVHGTGQVVHFDTTAERQMVAWTMGANANLPKDIAVRWAMAVPDEFHARFSATARRYRYVIYNHVYRPGILNSGVSHYHGELDVEKMQQAGQYLLGENDFTSFRAVHCQSRSPWRNVMHLNVTRHGRYVVIDIKANAFVHHMVRNITGSLIAVGRGEQKPEWIQWLLAQKDRTLAAATAKAEGLYLVSVDYPAHFGLPEMPIGPLFLPDNLN</sequence>
<reference key="1">
    <citation type="journal article" date="2008" name="PLoS ONE">
        <title>A recalibrated molecular clock and independent origins for the cholera pandemic clones.</title>
        <authorList>
            <person name="Feng L."/>
            <person name="Reeves P.R."/>
            <person name="Lan R."/>
            <person name="Ren Y."/>
            <person name="Gao C."/>
            <person name="Zhou Z."/>
            <person name="Ren Y."/>
            <person name="Cheng J."/>
            <person name="Wang W."/>
            <person name="Wang J."/>
            <person name="Qian W."/>
            <person name="Li D."/>
            <person name="Wang L."/>
        </authorList>
    </citation>
    <scope>NUCLEOTIDE SEQUENCE [LARGE SCALE GENOMIC DNA]</scope>
    <source>
        <strain>M66-2</strain>
    </source>
</reference>